<protein>
    <recommendedName>
        <fullName>Gamma-glutamylcyclotransferase</fullName>
        <ecNumber evidence="1">4.3.2.9</ecNumber>
    </recommendedName>
</protein>
<dbReference type="EC" id="4.3.2.9" evidence="1"/>
<dbReference type="EMBL" id="BC109622">
    <property type="protein sequence ID" value="AAI09623.1"/>
    <property type="molecule type" value="mRNA"/>
</dbReference>
<dbReference type="RefSeq" id="NP_001032699.1">
    <property type="nucleotide sequence ID" value="NM_001037610.2"/>
</dbReference>
<dbReference type="SMR" id="Q32LE4"/>
<dbReference type="FunCoup" id="Q32LE4">
    <property type="interactions" value="860"/>
</dbReference>
<dbReference type="STRING" id="9913.ENSBTAP00000014010"/>
<dbReference type="PaxDb" id="9913-ENSBTAP00000014010"/>
<dbReference type="GeneID" id="533374"/>
<dbReference type="KEGG" id="bta:533374"/>
<dbReference type="CTD" id="79017"/>
<dbReference type="VEuPathDB" id="HostDB:ENSBTAG00000010597"/>
<dbReference type="eggNOG" id="KOG4059">
    <property type="taxonomic scope" value="Eukaryota"/>
</dbReference>
<dbReference type="HOGENOM" id="CLU_048475_2_1_1"/>
<dbReference type="InParanoid" id="Q32LE4"/>
<dbReference type="OMA" id="APHDYVM"/>
<dbReference type="OrthoDB" id="2924818at2759"/>
<dbReference type="TreeFam" id="TF314378"/>
<dbReference type="Reactome" id="R-BTA-174403">
    <property type="pathway name" value="Glutathione synthesis and recycling"/>
</dbReference>
<dbReference type="Proteomes" id="UP000009136">
    <property type="component" value="Chromosome 4"/>
</dbReference>
<dbReference type="Bgee" id="ENSBTAG00000010597">
    <property type="expression patterns" value="Expressed in oocyte and 103 other cell types or tissues"/>
</dbReference>
<dbReference type="GO" id="GO:0005829">
    <property type="term" value="C:cytosol"/>
    <property type="evidence" value="ECO:0000250"/>
    <property type="project" value="UniProtKB"/>
</dbReference>
<dbReference type="GO" id="GO:0003839">
    <property type="term" value="F:gamma-glutamylcyclotransferase activity"/>
    <property type="evidence" value="ECO:0000250"/>
    <property type="project" value="UniProtKB"/>
</dbReference>
<dbReference type="GO" id="GO:0042803">
    <property type="term" value="F:protein homodimerization activity"/>
    <property type="evidence" value="ECO:0000250"/>
    <property type="project" value="UniProtKB"/>
</dbReference>
<dbReference type="GO" id="GO:0001836">
    <property type="term" value="P:release of cytochrome c from mitochondria"/>
    <property type="evidence" value="ECO:0000250"/>
    <property type="project" value="UniProtKB"/>
</dbReference>
<dbReference type="CDD" id="cd06661">
    <property type="entry name" value="GGCT_like"/>
    <property type="match status" value="1"/>
</dbReference>
<dbReference type="FunFam" id="3.10.490.10:FF:000007">
    <property type="entry name" value="Gamma-glutamylcyclotransferase"/>
    <property type="match status" value="1"/>
</dbReference>
<dbReference type="Gene3D" id="3.10.490.10">
    <property type="entry name" value="Gamma-glutamyl cyclotransferase-like"/>
    <property type="match status" value="1"/>
</dbReference>
<dbReference type="InterPro" id="IPR017939">
    <property type="entry name" value="G-Glutamylcylcotransferase"/>
</dbReference>
<dbReference type="InterPro" id="IPR013024">
    <property type="entry name" value="GGCT-like"/>
</dbReference>
<dbReference type="InterPro" id="IPR036568">
    <property type="entry name" value="GGCT-like_sf"/>
</dbReference>
<dbReference type="PANTHER" id="PTHR12935">
    <property type="entry name" value="GAMMA-GLUTAMYLCYCLOTRANSFERASE"/>
    <property type="match status" value="1"/>
</dbReference>
<dbReference type="PANTHER" id="PTHR12935:SF0">
    <property type="entry name" value="GAMMA-GLUTAMYLCYCLOTRANSFERASE"/>
    <property type="match status" value="1"/>
</dbReference>
<dbReference type="Pfam" id="PF13772">
    <property type="entry name" value="AIG2_2"/>
    <property type="match status" value="1"/>
</dbReference>
<dbReference type="SUPFAM" id="SSF110857">
    <property type="entry name" value="Gamma-glutamyl cyclotransferase-like"/>
    <property type="match status" value="1"/>
</dbReference>
<comment type="function">
    <text evidence="1">Catalyzes the formation of 5-oxoproline from gamma-glutamyl dipeptides and may play a significant role in glutathione homeostasis. Induces release of cytochrome c from mitochondria with resultant induction of apoptosis.</text>
</comment>
<comment type="catalytic activity">
    <reaction evidence="1">
        <text>an alpha-(gamma-L-glutamyl)-L-amino acid = 5-oxo-L-proline + an L-alpha-amino acid</text>
        <dbReference type="Rhea" id="RHEA:20505"/>
        <dbReference type="ChEBI" id="CHEBI:58402"/>
        <dbReference type="ChEBI" id="CHEBI:59869"/>
        <dbReference type="ChEBI" id="CHEBI:71304"/>
        <dbReference type="EC" id="4.3.2.9"/>
    </reaction>
    <physiologicalReaction direction="left-to-right" evidence="1">
        <dbReference type="Rhea" id="RHEA:20506"/>
    </physiologicalReaction>
</comment>
<comment type="subunit">
    <text evidence="1">Homodimer.</text>
</comment>
<comment type="similarity">
    <text evidence="3">Belongs to the gamma-glutamylcyclotransferase family.</text>
</comment>
<reference key="1">
    <citation type="submission" date="2005-11" db="EMBL/GenBank/DDBJ databases">
        <authorList>
            <consortium name="NIH - Mammalian Gene Collection (MGC) project"/>
        </authorList>
    </citation>
    <scope>NUCLEOTIDE SEQUENCE [LARGE SCALE MRNA]</scope>
    <source>
        <strain>Crossbred X Angus</strain>
        <tissue>Liver</tissue>
    </source>
</reference>
<feature type="chain" id="PRO_0000250163" description="Gamma-glutamylcyclotransferase">
    <location>
        <begin position="1"/>
        <end position="188"/>
    </location>
</feature>
<feature type="active site" description="Proton acceptor" evidence="1">
    <location>
        <position position="98"/>
    </location>
</feature>
<feature type="binding site" evidence="1">
    <location>
        <begin position="19"/>
        <end position="22"/>
    </location>
    <ligand>
        <name>substrate</name>
    </ligand>
</feature>
<feature type="modified residue" description="Phosphoserine" evidence="2">
    <location>
        <position position="173"/>
    </location>
</feature>
<evidence type="ECO:0000250" key="1">
    <source>
        <dbReference type="UniProtKB" id="O75223"/>
    </source>
</evidence>
<evidence type="ECO:0000250" key="2">
    <source>
        <dbReference type="UniProtKB" id="Q9D7X8"/>
    </source>
</evidence>
<evidence type="ECO:0000305" key="3"/>
<accession>Q32LE4</accession>
<proteinExistence type="evidence at transcript level"/>
<gene>
    <name type="primary">GGCT</name>
</gene>
<organism>
    <name type="scientific">Bos taurus</name>
    <name type="common">Bovine</name>
    <dbReference type="NCBI Taxonomy" id="9913"/>
    <lineage>
        <taxon>Eukaryota</taxon>
        <taxon>Metazoa</taxon>
        <taxon>Chordata</taxon>
        <taxon>Craniata</taxon>
        <taxon>Vertebrata</taxon>
        <taxon>Euteleostomi</taxon>
        <taxon>Mammalia</taxon>
        <taxon>Eutheria</taxon>
        <taxon>Laurasiatheria</taxon>
        <taxon>Artiodactyla</taxon>
        <taxon>Ruminantia</taxon>
        <taxon>Pecora</taxon>
        <taxon>Bovidae</taxon>
        <taxon>Bovinae</taxon>
        <taxon>Bos</taxon>
    </lineage>
</organism>
<sequence>MANFGCEDLRSQDGESFLYFAYGSNLLTERIHLRNPSAVFYSVARLQDFKLDFGNPQGKTSETWHGGIATIFESPGDEVWGVVWKMNKSNLSSLDKQEGVKSGMYVPIEVTVSTQEGKEITCRSYQMTNYESVPPSPQYKKVICMGAKENGLPLEYQKKLNSIEPNDYKGKVSEEIEDIIKKGEAKTH</sequence>
<keyword id="KW-0456">Lyase</keyword>
<keyword id="KW-0597">Phosphoprotein</keyword>
<keyword id="KW-1185">Reference proteome</keyword>
<name>GGCT_BOVIN</name>